<organism>
    <name type="scientific">Cereibacter sphaeroides (strain ATCC 17029 / ATH 2.4.9)</name>
    <name type="common">Rhodobacter sphaeroides</name>
    <dbReference type="NCBI Taxonomy" id="349101"/>
    <lineage>
        <taxon>Bacteria</taxon>
        <taxon>Pseudomonadati</taxon>
        <taxon>Pseudomonadota</taxon>
        <taxon>Alphaproteobacteria</taxon>
        <taxon>Rhodobacterales</taxon>
        <taxon>Paracoccaceae</taxon>
        <taxon>Cereibacter</taxon>
    </lineage>
</organism>
<reference key="1">
    <citation type="submission" date="2007-02" db="EMBL/GenBank/DDBJ databases">
        <title>Complete sequence of chromosome 1 of Rhodobacter sphaeroides ATCC 17029.</title>
        <authorList>
            <person name="Copeland A."/>
            <person name="Lucas S."/>
            <person name="Lapidus A."/>
            <person name="Barry K."/>
            <person name="Detter J.C."/>
            <person name="Glavina del Rio T."/>
            <person name="Hammon N."/>
            <person name="Israni S."/>
            <person name="Dalin E."/>
            <person name="Tice H."/>
            <person name="Pitluck S."/>
            <person name="Kiss H."/>
            <person name="Brettin T."/>
            <person name="Bruce D."/>
            <person name="Han C."/>
            <person name="Tapia R."/>
            <person name="Gilna P."/>
            <person name="Schmutz J."/>
            <person name="Larimer F."/>
            <person name="Land M."/>
            <person name="Hauser L."/>
            <person name="Kyrpides N."/>
            <person name="Mikhailova N."/>
            <person name="Richardson P."/>
            <person name="Mackenzie C."/>
            <person name="Choudhary M."/>
            <person name="Donohue T.J."/>
            <person name="Kaplan S."/>
        </authorList>
    </citation>
    <scope>NUCLEOTIDE SEQUENCE [LARGE SCALE GENOMIC DNA]</scope>
    <source>
        <strain>ATCC 17029 / ATH 2.4.9</strain>
    </source>
</reference>
<comment type="function">
    <text evidence="1">Catalyzes the transfer of the phosphoribosyl group of 5-phosphorylribose-1-pyrophosphate (PRPP) to anthranilate to yield N-(5'-phosphoribosyl)-anthranilate (PRA).</text>
</comment>
<comment type="catalytic activity">
    <reaction evidence="1">
        <text>N-(5-phospho-beta-D-ribosyl)anthranilate + diphosphate = 5-phospho-alpha-D-ribose 1-diphosphate + anthranilate</text>
        <dbReference type="Rhea" id="RHEA:11768"/>
        <dbReference type="ChEBI" id="CHEBI:16567"/>
        <dbReference type="ChEBI" id="CHEBI:18277"/>
        <dbReference type="ChEBI" id="CHEBI:33019"/>
        <dbReference type="ChEBI" id="CHEBI:58017"/>
        <dbReference type="EC" id="2.4.2.18"/>
    </reaction>
</comment>
<comment type="cofactor">
    <cofactor evidence="1">
        <name>Mg(2+)</name>
        <dbReference type="ChEBI" id="CHEBI:18420"/>
    </cofactor>
    <text evidence="1">Binds 2 magnesium ions per monomer.</text>
</comment>
<comment type="pathway">
    <text evidence="1">Amino-acid biosynthesis; L-tryptophan biosynthesis; L-tryptophan from chorismate: step 2/5.</text>
</comment>
<comment type="subunit">
    <text evidence="1">Homodimer.</text>
</comment>
<comment type="similarity">
    <text evidence="1">Belongs to the anthranilate phosphoribosyltransferase family.</text>
</comment>
<evidence type="ECO:0000255" key="1">
    <source>
        <dbReference type="HAMAP-Rule" id="MF_00211"/>
    </source>
</evidence>
<protein>
    <recommendedName>
        <fullName evidence="1">Anthranilate phosphoribosyltransferase</fullName>
        <ecNumber evidence="1">2.4.2.18</ecNumber>
    </recommendedName>
</protein>
<dbReference type="EC" id="2.4.2.18" evidence="1"/>
<dbReference type="EMBL" id="CP000577">
    <property type="protein sequence ID" value="ABN75824.1"/>
    <property type="molecule type" value="Genomic_DNA"/>
</dbReference>
<dbReference type="RefSeq" id="WP_011840557.1">
    <property type="nucleotide sequence ID" value="NC_009049.1"/>
</dbReference>
<dbReference type="SMR" id="A3PHK8"/>
<dbReference type="KEGG" id="rsh:Rsph17029_0711"/>
<dbReference type="HOGENOM" id="CLU_034315_2_1_5"/>
<dbReference type="UniPathway" id="UPA00035">
    <property type="reaction ID" value="UER00041"/>
</dbReference>
<dbReference type="GO" id="GO:0005829">
    <property type="term" value="C:cytosol"/>
    <property type="evidence" value="ECO:0007669"/>
    <property type="project" value="TreeGrafter"/>
</dbReference>
<dbReference type="GO" id="GO:0004048">
    <property type="term" value="F:anthranilate phosphoribosyltransferase activity"/>
    <property type="evidence" value="ECO:0007669"/>
    <property type="project" value="UniProtKB-UniRule"/>
</dbReference>
<dbReference type="GO" id="GO:0000287">
    <property type="term" value="F:magnesium ion binding"/>
    <property type="evidence" value="ECO:0007669"/>
    <property type="project" value="UniProtKB-UniRule"/>
</dbReference>
<dbReference type="GO" id="GO:0000162">
    <property type="term" value="P:L-tryptophan biosynthetic process"/>
    <property type="evidence" value="ECO:0007669"/>
    <property type="project" value="UniProtKB-UniRule"/>
</dbReference>
<dbReference type="FunFam" id="3.40.1030.10:FF:000002">
    <property type="entry name" value="Anthranilate phosphoribosyltransferase"/>
    <property type="match status" value="1"/>
</dbReference>
<dbReference type="Gene3D" id="3.40.1030.10">
    <property type="entry name" value="Nucleoside phosphorylase/phosphoribosyltransferase catalytic domain"/>
    <property type="match status" value="1"/>
</dbReference>
<dbReference type="Gene3D" id="1.20.970.10">
    <property type="entry name" value="Transferase, Pyrimidine Nucleoside Phosphorylase, Chain C"/>
    <property type="match status" value="1"/>
</dbReference>
<dbReference type="HAMAP" id="MF_00211">
    <property type="entry name" value="TrpD"/>
    <property type="match status" value="1"/>
</dbReference>
<dbReference type="InterPro" id="IPR005940">
    <property type="entry name" value="Anthranilate_Pribosyl_Tfrase"/>
</dbReference>
<dbReference type="InterPro" id="IPR000312">
    <property type="entry name" value="Glycosyl_Trfase_fam3"/>
</dbReference>
<dbReference type="InterPro" id="IPR017459">
    <property type="entry name" value="Glycosyl_Trfase_fam3_N_dom"/>
</dbReference>
<dbReference type="InterPro" id="IPR036320">
    <property type="entry name" value="Glycosyl_Trfase_fam3_N_dom_sf"/>
</dbReference>
<dbReference type="InterPro" id="IPR035902">
    <property type="entry name" value="Nuc_phospho_transferase"/>
</dbReference>
<dbReference type="NCBIfam" id="TIGR01245">
    <property type="entry name" value="trpD"/>
    <property type="match status" value="1"/>
</dbReference>
<dbReference type="PANTHER" id="PTHR43285">
    <property type="entry name" value="ANTHRANILATE PHOSPHORIBOSYLTRANSFERASE"/>
    <property type="match status" value="1"/>
</dbReference>
<dbReference type="PANTHER" id="PTHR43285:SF2">
    <property type="entry name" value="ANTHRANILATE PHOSPHORIBOSYLTRANSFERASE"/>
    <property type="match status" value="1"/>
</dbReference>
<dbReference type="Pfam" id="PF02885">
    <property type="entry name" value="Glycos_trans_3N"/>
    <property type="match status" value="1"/>
</dbReference>
<dbReference type="Pfam" id="PF00591">
    <property type="entry name" value="Glycos_transf_3"/>
    <property type="match status" value="1"/>
</dbReference>
<dbReference type="SUPFAM" id="SSF52418">
    <property type="entry name" value="Nucleoside phosphorylase/phosphoribosyltransferase catalytic domain"/>
    <property type="match status" value="1"/>
</dbReference>
<dbReference type="SUPFAM" id="SSF47648">
    <property type="entry name" value="Nucleoside phosphorylase/phosphoribosyltransferase N-terminal domain"/>
    <property type="match status" value="1"/>
</dbReference>
<name>TRPD_CERS1</name>
<sequence length="338" mass="34892">MSDRLKPLIGTAATRPLSREEAEFAFECLFEGEATPAQMGGLLMALRTRGETVDEYAAAASVMRAKCHKVRAPNGAIDIVGTGGDGKGTLNISTATAFVVAGAGVPVAKHGNRNLSSKSGAADALTEMGLNVMIGPEQVEACLMEAGIGFMMAPMHHPAMRHVGPVRAELGTRTIFNILGPLTNPAGVKRQLTGAFSPDLIRPMAEVLSALGSEKAWLVHGGDGTDELAISAASKVAALEGGQIREFELHPEEAGLPVHPFEEIVGGTPAENAQAFRALLDGAPGAYRDAVLLNAAAALVVADRAAHLREGVEIATDSILSGAAKAKVALLARLTNAA</sequence>
<keyword id="KW-0028">Amino-acid biosynthesis</keyword>
<keyword id="KW-0057">Aromatic amino acid biosynthesis</keyword>
<keyword id="KW-0328">Glycosyltransferase</keyword>
<keyword id="KW-0460">Magnesium</keyword>
<keyword id="KW-0479">Metal-binding</keyword>
<keyword id="KW-0808">Transferase</keyword>
<keyword id="KW-0822">Tryptophan biosynthesis</keyword>
<proteinExistence type="inferred from homology"/>
<accession>A3PHK8</accession>
<gene>
    <name evidence="1" type="primary">trpD</name>
    <name type="ordered locus">Rsph17029_0711</name>
</gene>
<feature type="chain" id="PRO_1000043059" description="Anthranilate phosphoribosyltransferase">
    <location>
        <begin position="1"/>
        <end position="338"/>
    </location>
</feature>
<feature type="binding site" evidence="1">
    <location>
        <position position="81"/>
    </location>
    <ligand>
        <name>5-phospho-alpha-D-ribose 1-diphosphate</name>
        <dbReference type="ChEBI" id="CHEBI:58017"/>
    </ligand>
</feature>
<feature type="binding site" evidence="1">
    <location>
        <position position="81"/>
    </location>
    <ligand>
        <name>anthranilate</name>
        <dbReference type="ChEBI" id="CHEBI:16567"/>
        <label>1</label>
    </ligand>
</feature>
<feature type="binding site" evidence="1">
    <location>
        <begin position="84"/>
        <end position="85"/>
    </location>
    <ligand>
        <name>5-phospho-alpha-D-ribose 1-diphosphate</name>
        <dbReference type="ChEBI" id="CHEBI:58017"/>
    </ligand>
</feature>
<feature type="binding site" evidence="1">
    <location>
        <position position="89"/>
    </location>
    <ligand>
        <name>5-phospho-alpha-D-ribose 1-diphosphate</name>
        <dbReference type="ChEBI" id="CHEBI:58017"/>
    </ligand>
</feature>
<feature type="binding site" evidence="1">
    <location>
        <begin position="91"/>
        <end position="94"/>
    </location>
    <ligand>
        <name>5-phospho-alpha-D-ribose 1-diphosphate</name>
        <dbReference type="ChEBI" id="CHEBI:58017"/>
    </ligand>
</feature>
<feature type="binding site" evidence="1">
    <location>
        <position position="93"/>
    </location>
    <ligand>
        <name>Mg(2+)</name>
        <dbReference type="ChEBI" id="CHEBI:18420"/>
        <label>1</label>
    </ligand>
</feature>
<feature type="binding site" evidence="1">
    <location>
        <begin position="109"/>
        <end position="117"/>
    </location>
    <ligand>
        <name>5-phospho-alpha-D-ribose 1-diphosphate</name>
        <dbReference type="ChEBI" id="CHEBI:58017"/>
    </ligand>
</feature>
<feature type="binding site" evidence="1">
    <location>
        <position position="112"/>
    </location>
    <ligand>
        <name>anthranilate</name>
        <dbReference type="ChEBI" id="CHEBI:16567"/>
        <label>1</label>
    </ligand>
</feature>
<feature type="binding site" evidence="1">
    <location>
        <position position="121"/>
    </location>
    <ligand>
        <name>5-phospho-alpha-D-ribose 1-diphosphate</name>
        <dbReference type="ChEBI" id="CHEBI:58017"/>
    </ligand>
</feature>
<feature type="binding site" evidence="1">
    <location>
        <position position="167"/>
    </location>
    <ligand>
        <name>anthranilate</name>
        <dbReference type="ChEBI" id="CHEBI:16567"/>
        <label>2</label>
    </ligand>
</feature>
<feature type="binding site" evidence="1">
    <location>
        <position position="226"/>
    </location>
    <ligand>
        <name>Mg(2+)</name>
        <dbReference type="ChEBI" id="CHEBI:18420"/>
        <label>2</label>
    </ligand>
</feature>
<feature type="binding site" evidence="1">
    <location>
        <position position="227"/>
    </location>
    <ligand>
        <name>Mg(2+)</name>
        <dbReference type="ChEBI" id="CHEBI:18420"/>
        <label>1</label>
    </ligand>
</feature>
<feature type="binding site" evidence="1">
    <location>
        <position position="227"/>
    </location>
    <ligand>
        <name>Mg(2+)</name>
        <dbReference type="ChEBI" id="CHEBI:18420"/>
        <label>2</label>
    </ligand>
</feature>